<keyword id="KW-0027">Amidation</keyword>
<keyword id="KW-0878">Amphibian defense peptide</keyword>
<keyword id="KW-0044">Antibiotic</keyword>
<keyword id="KW-0929">Antimicrobial</keyword>
<keyword id="KW-0051">Antiviral defense</keyword>
<keyword id="KW-0903">Direct protein sequencing</keyword>
<keyword id="KW-0964">Secreted</keyword>
<name>CR11_RANGI</name>
<protein>
    <recommendedName>
        <fullName>Caerin-1.1</fullName>
    </recommendedName>
    <component>
        <recommendedName>
            <fullName>Caerin-1.1.1</fullName>
        </recommendedName>
    </component>
    <component>
        <recommendedName>
            <fullName>Caerin-1.1.3</fullName>
        </recommendedName>
    </component>
    <component>
        <recommendedName>
            <fullName>Caerin-1.1.5</fullName>
        </recommendedName>
    </component>
    <component>
        <recommendedName>
            <fullName>Caerin-1.1.6</fullName>
        </recommendedName>
    </component>
    <component>
        <recommendedName>
            <fullName>Caerin-1.1.7</fullName>
        </recommendedName>
    </component>
    <component>
        <recommendedName>
            <fullName>Caerin-1.1.8</fullName>
        </recommendedName>
    </component>
</protein>
<evidence type="ECO:0000269" key="1">
    <source ref="1"/>
</evidence>
<evidence type="ECO:0000305" key="2"/>
<organism>
    <name type="scientific">Ranoidea gilleni</name>
    <name type="common">Centralian tree frog</name>
    <name type="synonym">Litoria gilleni</name>
    <dbReference type="NCBI Taxonomy" id="39405"/>
    <lineage>
        <taxon>Eukaryota</taxon>
        <taxon>Metazoa</taxon>
        <taxon>Chordata</taxon>
        <taxon>Craniata</taxon>
        <taxon>Vertebrata</taxon>
        <taxon>Euteleostomi</taxon>
        <taxon>Amphibia</taxon>
        <taxon>Batrachia</taxon>
        <taxon>Anura</taxon>
        <taxon>Neobatrachia</taxon>
        <taxon>Hyloidea</taxon>
        <taxon>Hylidae</taxon>
        <taxon>Pelodryadinae</taxon>
        <taxon>Ranoidea</taxon>
    </lineage>
</organism>
<accession>P62569</accession>
<accession>P56226</accession>
<sequence>GLLSVLGSVAKHVLPHVVPVIAEHL</sequence>
<comment type="function">
    <text>Antibacterial and antiviral peptides that adopt an alpha helical conformation which can disrupt bacterial membranes. Each caerin displays a different antimicrobial specificity.</text>
</comment>
<comment type="subcellular location">
    <subcellularLocation>
        <location>Secreted</location>
    </subcellularLocation>
</comment>
<comment type="tissue specificity">
    <text>Expressed by the skin parotoid and/or rostral glands.</text>
</comment>
<comment type="domain">
    <text>Contains two amphipathic alpha helix regions separated by a region of less-defined helicity and greater flexibility.</text>
</comment>
<comment type="PTM">
    <text>The major product is Caerin-1.1; in addition, different peptides are produced that are missing some amino acid residues at the N-terminus or C-terminus. Caerin-1.1.1 is inactive.</text>
</comment>
<comment type="mass spectrometry">
    <molecule>Caerin-1.1</molecule>
</comment>
<comment type="mass spectrometry">
    <molecule>Caerin-1.1.1</molecule>
</comment>
<comment type="mass spectrometry">
    <molecule>Caerin-1.1.3</molecule>
</comment>
<comment type="mass spectrometry">
    <molecule>Caerin-1.1.5</molecule>
</comment>
<comment type="mass spectrometry">
    <molecule>Caerin-1.1.6</molecule>
</comment>
<comment type="mass spectrometry">
    <molecule>Caerin-1.1.7</molecule>
</comment>
<comment type="mass spectrometry">
    <molecule>Caerin-1.1.8</molecule>
</comment>
<comment type="similarity">
    <text evidence="2">Belongs to the frog skin active peptide (FSAP) family. Caerin subfamily.</text>
</comment>
<feature type="peptide" id="PRO_0000010164" description="Caerin-1.1">
    <location>
        <begin position="1"/>
        <end position="25"/>
    </location>
</feature>
<feature type="peptide" id="PRO_0000010165" description="Caerin-1.1.5">
    <location>
        <begin position="1"/>
        <end position="16"/>
    </location>
</feature>
<feature type="peptide" id="PRO_0000010166" description="Caerin-1.1.6">
    <location>
        <begin position="1"/>
        <end position="15"/>
    </location>
</feature>
<feature type="peptide" id="PRO_0000010167" description="Caerin-1.1.7">
    <location>
        <begin position="1"/>
        <end position="12"/>
    </location>
</feature>
<feature type="peptide" id="PRO_0000010168" description="Caerin-1.1.8">
    <location>
        <begin position="1"/>
        <end position="10"/>
    </location>
</feature>
<feature type="peptide" id="PRO_0000010169" description="Caerin-1.1.1">
    <location>
        <begin position="3"/>
        <end position="25"/>
    </location>
</feature>
<feature type="peptide" id="PRO_0000010170" description="Caerin-1.1.3">
    <location>
        <begin position="13"/>
        <end position="25"/>
    </location>
</feature>
<feature type="modified residue" description="Leucine amide" evidence="1">
    <location>
        <position position="25"/>
    </location>
</feature>
<proteinExistence type="evidence at protein level"/>
<dbReference type="SMR" id="P62569"/>
<dbReference type="GO" id="GO:0005576">
    <property type="term" value="C:extracellular region"/>
    <property type="evidence" value="ECO:0007669"/>
    <property type="project" value="UniProtKB-SubCell"/>
</dbReference>
<dbReference type="GO" id="GO:0042742">
    <property type="term" value="P:defense response to bacterium"/>
    <property type="evidence" value="ECO:0007669"/>
    <property type="project" value="UniProtKB-KW"/>
</dbReference>
<dbReference type="GO" id="GO:0051607">
    <property type="term" value="P:defense response to virus"/>
    <property type="evidence" value="ECO:0007669"/>
    <property type="project" value="UniProtKB-KW"/>
</dbReference>
<dbReference type="InterPro" id="IPR010000">
    <property type="entry name" value="Caerin_1"/>
</dbReference>
<dbReference type="Pfam" id="PF07440">
    <property type="entry name" value="Caerin_1"/>
    <property type="match status" value="1"/>
</dbReference>
<reference key="1">
    <citation type="journal article" date="1993" name="J. Chem. Res.">
        <title>Peptides from Australian frogs. The structures of the caerins and caeridins from Litoria gilleni.</title>
        <authorList>
            <person name="Waugh R.J."/>
            <person name="Stone D.J.M."/>
            <person name="Bowie J.H."/>
            <person name="Wallace J.C."/>
            <person name="Tyler M.J."/>
        </authorList>
    </citation>
    <scope>PROTEIN SEQUENCE</scope>
    <scope>AMIDATION AT LEU-25</scope>
    <scope>MASS SPECTROMETRY</scope>
    <source>
        <tissue>Parotoid gland</tissue>
    </source>
</reference>